<dbReference type="EC" id="3.5.2.-" evidence="1"/>
<dbReference type="EMBL" id="CP000946">
    <property type="protein sequence ID" value="ACA76507.1"/>
    <property type="molecule type" value="Genomic_DNA"/>
</dbReference>
<dbReference type="RefSeq" id="WP_001264452.1">
    <property type="nucleotide sequence ID" value="NZ_MTFT01000004.1"/>
</dbReference>
<dbReference type="SMR" id="B1ITC8"/>
<dbReference type="GeneID" id="93779129"/>
<dbReference type="KEGG" id="ecl:EcolC_0835"/>
<dbReference type="HOGENOM" id="CLU_015572_2_0_6"/>
<dbReference type="GO" id="GO:0005829">
    <property type="term" value="C:cytosol"/>
    <property type="evidence" value="ECO:0007669"/>
    <property type="project" value="TreeGrafter"/>
</dbReference>
<dbReference type="GO" id="GO:0016812">
    <property type="term" value="F:hydrolase activity, acting on carbon-nitrogen (but not peptide) bonds, in cyclic amides"/>
    <property type="evidence" value="ECO:0007669"/>
    <property type="project" value="UniProtKB-UniRule"/>
</dbReference>
<dbReference type="GO" id="GO:0046872">
    <property type="term" value="F:metal ion binding"/>
    <property type="evidence" value="ECO:0007669"/>
    <property type="project" value="UniProtKB-KW"/>
</dbReference>
<dbReference type="GO" id="GO:0006208">
    <property type="term" value="P:pyrimidine nucleobase catabolic process"/>
    <property type="evidence" value="ECO:0007669"/>
    <property type="project" value="InterPro"/>
</dbReference>
<dbReference type="CDD" id="cd01314">
    <property type="entry name" value="D-HYD"/>
    <property type="match status" value="1"/>
</dbReference>
<dbReference type="FunFam" id="3.20.20.140:FF:000026">
    <property type="entry name" value="D-phenylhydantoinase"/>
    <property type="match status" value="1"/>
</dbReference>
<dbReference type="Gene3D" id="3.20.20.140">
    <property type="entry name" value="Metal-dependent hydrolases"/>
    <property type="match status" value="1"/>
</dbReference>
<dbReference type="Gene3D" id="2.30.40.10">
    <property type="entry name" value="Urease, subunit C, domain 1"/>
    <property type="match status" value="1"/>
</dbReference>
<dbReference type="HAMAP" id="MF_01644">
    <property type="entry name" value="D_hydantoinase"/>
    <property type="match status" value="1"/>
</dbReference>
<dbReference type="InterPro" id="IPR006680">
    <property type="entry name" value="Amidohydro-rel"/>
</dbReference>
<dbReference type="InterPro" id="IPR023766">
    <property type="entry name" value="D_phenylhydantoinase"/>
</dbReference>
<dbReference type="InterPro" id="IPR011778">
    <property type="entry name" value="Hydantoinase/dihydroPyrase"/>
</dbReference>
<dbReference type="InterPro" id="IPR011059">
    <property type="entry name" value="Metal-dep_hydrolase_composite"/>
</dbReference>
<dbReference type="InterPro" id="IPR032466">
    <property type="entry name" value="Metal_Hydrolase"/>
</dbReference>
<dbReference type="InterPro" id="IPR050378">
    <property type="entry name" value="Metallo-dep_Hydrolases_sf"/>
</dbReference>
<dbReference type="NCBIfam" id="TIGR02033">
    <property type="entry name" value="D-hydantoinase"/>
    <property type="match status" value="1"/>
</dbReference>
<dbReference type="PANTHER" id="PTHR11647:SF1">
    <property type="entry name" value="COLLAPSIN RESPONSE MEDIATOR PROTEIN"/>
    <property type="match status" value="1"/>
</dbReference>
<dbReference type="PANTHER" id="PTHR11647">
    <property type="entry name" value="HYDRANTOINASE/DIHYDROPYRIMIDINASE FAMILY MEMBER"/>
    <property type="match status" value="1"/>
</dbReference>
<dbReference type="Pfam" id="PF01979">
    <property type="entry name" value="Amidohydro_1"/>
    <property type="match status" value="1"/>
</dbReference>
<dbReference type="SUPFAM" id="SSF51338">
    <property type="entry name" value="Composite domain of metallo-dependent hydrolases"/>
    <property type="match status" value="2"/>
</dbReference>
<dbReference type="SUPFAM" id="SSF51556">
    <property type="entry name" value="Metallo-dependent hydrolases"/>
    <property type="match status" value="1"/>
</dbReference>
<gene>
    <name evidence="1" type="primary">hyuA</name>
    <name type="ordered locus">EcolC_0835</name>
</gene>
<organism>
    <name type="scientific">Escherichia coli (strain ATCC 8739 / DSM 1576 / NBRC 3972 / NCIMB 8545 / WDCM 00012 / Crooks)</name>
    <dbReference type="NCBI Taxonomy" id="481805"/>
    <lineage>
        <taxon>Bacteria</taxon>
        <taxon>Pseudomonadati</taxon>
        <taxon>Pseudomonadota</taxon>
        <taxon>Gammaproteobacteria</taxon>
        <taxon>Enterobacterales</taxon>
        <taxon>Enterobacteriaceae</taxon>
        <taxon>Escherichia</taxon>
    </lineage>
</organism>
<proteinExistence type="inferred from homology"/>
<evidence type="ECO:0000255" key="1">
    <source>
        <dbReference type="HAMAP-Rule" id="MF_01644"/>
    </source>
</evidence>
<protein>
    <recommendedName>
        <fullName evidence="1">D-phenylhydantoinase</fullName>
        <ecNumber evidence="1">3.5.2.-</ecNumber>
    </recommendedName>
    <alternativeName>
        <fullName evidence="1">Hydantoin-utilizing enzyme HyuA</fullName>
    </alternativeName>
</protein>
<comment type="function">
    <text evidence="1">Catalyzes the stereospecific hydrolysis of the cyclic amide bond of D-hydantoin derivatives with an aromatic side chains at the 5'-position. Has no activity on dihydropyrimidines. The physiological function is unknown.</text>
</comment>
<comment type="catalytic activity">
    <reaction evidence="1">
        <text>D-5-phenylhydantoin + H2O = N-carbamoyl-D-phenylglycine + H(+)</text>
        <dbReference type="Rhea" id="RHEA:51664"/>
        <dbReference type="ChEBI" id="CHEBI:15377"/>
        <dbReference type="ChEBI" id="CHEBI:15378"/>
        <dbReference type="ChEBI" id="CHEBI:140750"/>
        <dbReference type="ChEBI" id="CHEBI:140758"/>
    </reaction>
</comment>
<comment type="cofactor">
    <cofactor evidence="1">
        <name>a divalent metal cation</name>
        <dbReference type="ChEBI" id="CHEBI:60240"/>
    </cofactor>
    <text evidence="1">Binds 2 divalent metal cations per subunit.</text>
</comment>
<comment type="subunit">
    <text evidence="1">Homotetramer.</text>
</comment>
<comment type="PTM">
    <text evidence="1">Carboxylation allows a single lysine to coordinate two divalent metal cations.</text>
</comment>
<comment type="similarity">
    <text evidence="1">Belongs to the metallo-dependent hydrolases superfamily. Hydantoinase/dihydropyrimidinase family.</text>
</comment>
<reference key="1">
    <citation type="submission" date="2008-02" db="EMBL/GenBank/DDBJ databases">
        <title>Complete sequence of Escherichia coli C str. ATCC 8739.</title>
        <authorList>
            <person name="Copeland A."/>
            <person name="Lucas S."/>
            <person name="Lapidus A."/>
            <person name="Glavina del Rio T."/>
            <person name="Dalin E."/>
            <person name="Tice H."/>
            <person name="Bruce D."/>
            <person name="Goodwin L."/>
            <person name="Pitluck S."/>
            <person name="Kiss H."/>
            <person name="Brettin T."/>
            <person name="Detter J.C."/>
            <person name="Han C."/>
            <person name="Kuske C.R."/>
            <person name="Schmutz J."/>
            <person name="Larimer F."/>
            <person name="Land M."/>
            <person name="Hauser L."/>
            <person name="Kyrpides N."/>
            <person name="Mikhailova N."/>
            <person name="Ingram L."/>
            <person name="Richardson P."/>
        </authorList>
    </citation>
    <scope>NUCLEOTIDE SEQUENCE [LARGE SCALE GENOMIC DNA]</scope>
    <source>
        <strain>ATCC 8739 / DSM 1576 / NBRC 3972 / NCIMB 8545 / WDCM 00012 / Crooks</strain>
    </source>
</reference>
<keyword id="KW-0378">Hydrolase</keyword>
<keyword id="KW-0479">Metal-binding</keyword>
<feature type="chain" id="PRO_1000088215" description="D-phenylhydantoinase">
    <location>
        <begin position="1"/>
        <end position="461"/>
    </location>
</feature>
<feature type="binding site" evidence="1">
    <location>
        <position position="59"/>
    </location>
    <ligand>
        <name>a divalent metal cation</name>
        <dbReference type="ChEBI" id="CHEBI:60240"/>
        <label>1</label>
    </ligand>
</feature>
<feature type="binding site" evidence="1">
    <location>
        <position position="61"/>
    </location>
    <ligand>
        <name>a divalent metal cation</name>
        <dbReference type="ChEBI" id="CHEBI:60240"/>
        <label>1</label>
    </ligand>
</feature>
<feature type="binding site" description="via carbamate group" evidence="1">
    <location>
        <position position="151"/>
    </location>
    <ligand>
        <name>a divalent metal cation</name>
        <dbReference type="ChEBI" id="CHEBI:60240"/>
        <label>1</label>
    </ligand>
</feature>
<feature type="binding site" description="via carbamate group" evidence="1">
    <location>
        <position position="151"/>
    </location>
    <ligand>
        <name>a divalent metal cation</name>
        <dbReference type="ChEBI" id="CHEBI:60240"/>
        <label>2</label>
    </ligand>
</feature>
<feature type="binding site" evidence="1">
    <location>
        <position position="156"/>
    </location>
    <ligand>
        <name>substrate</name>
    </ligand>
</feature>
<feature type="binding site" evidence="1">
    <location>
        <position position="182"/>
    </location>
    <ligand>
        <name>a divalent metal cation</name>
        <dbReference type="ChEBI" id="CHEBI:60240"/>
        <label>2</label>
    </ligand>
</feature>
<feature type="binding site" evidence="1">
    <location>
        <position position="239"/>
    </location>
    <ligand>
        <name>a divalent metal cation</name>
        <dbReference type="ChEBI" id="CHEBI:60240"/>
        <label>2</label>
    </ligand>
</feature>
<feature type="binding site" evidence="1">
    <location>
        <position position="286"/>
    </location>
    <ligand>
        <name>substrate</name>
    </ligand>
</feature>
<feature type="binding site" evidence="1">
    <location>
        <position position="313"/>
    </location>
    <ligand>
        <name>a divalent metal cation</name>
        <dbReference type="ChEBI" id="CHEBI:60240"/>
        <label>1</label>
    </ligand>
</feature>
<feature type="binding site" evidence="1">
    <location>
        <position position="335"/>
    </location>
    <ligand>
        <name>substrate</name>
    </ligand>
</feature>
<feature type="modified residue" description="N6-carboxylysine" evidence="1">
    <location>
        <position position="151"/>
    </location>
</feature>
<name>PHYDA_ECOLC</name>
<sequence>MRVLIKNGTVVNADGQAKQDLLIESGIVRQLGNNISPQLPYEEIDATGCYVFPGGVDVHTHFNIDVGIARSCDDFFTGTRAAACGGTTTIIDHMGFGPNGCRLRHQLEVYRGYAAHKAVIDYSFHGVIQHINHAILDEIPMMVEEGLSSFKLYLTYQYKLNDDEVLQALRRLHESGALTTVHPENDAAIASKRAEFIAAGLTAPRYHALSRPLECEAEAIARMINLAQIAGNAPLYIVHLSNGLGLDYLRLARANHQPVWVETCPQYLLLDERSYDTEDGMKFILSPPLRNVREQDKLWCGISDGAIDVVATDHCTFSMAQRLQISKGDFSRCPNGLPGVENRMQLLFSSGVMTGRITPERFVELTSAMPARLFGLWPQKGLLAPGSDGDVVIIDPRQSQQIQHRHLHDNADYSPWEGFTCQGAIVRTLSRGETIFCDGTFTGKAGRGRFLRRKPFVPPVL</sequence>
<accession>B1ITC8</accession>